<proteinExistence type="inferred from homology"/>
<comment type="subcellular location">
    <subcellularLocation>
        <location evidence="1">Cytoplasm</location>
    </subcellularLocation>
</comment>
<comment type="similarity">
    <text evidence="1">Belongs to the TACO1 family.</text>
</comment>
<feature type="chain" id="PRO_1000045356" description="Probable transcriptional regulatory protein P9303_05381">
    <location>
        <begin position="1"/>
        <end position="248"/>
    </location>
</feature>
<accession>A2C730</accession>
<evidence type="ECO:0000255" key="1">
    <source>
        <dbReference type="HAMAP-Rule" id="MF_00693"/>
    </source>
</evidence>
<protein>
    <recommendedName>
        <fullName evidence="1">Probable transcriptional regulatory protein P9303_05381</fullName>
    </recommendedName>
</protein>
<keyword id="KW-0963">Cytoplasm</keyword>
<keyword id="KW-0238">DNA-binding</keyword>
<keyword id="KW-0804">Transcription</keyword>
<keyword id="KW-0805">Transcription regulation</keyword>
<name>Y538_PROM3</name>
<gene>
    <name type="ordered locus">P9303_05381</name>
</gene>
<sequence length="248" mass="26858">MAGHSKWSQIKRSKAVVDAKRGAVFTRLAREISVAARSGGDPNGNFQLRTAINKAKAARMPAANIERAIAKGSGHDQHGACQLEAIRYEGYGPGGVAVLIEALTDNRNRTAADLRLTFNKHGGKLGESGCVAYLFEQRSEVYLSAQSAQDGGKVSEDALLENLLELEADGYQLIDDGGAVVYGPFQALEGLQAGLRDQGWIIEGWEHCWRPLTTISQADQKSEDQCLQLLDALDELDDVHHISSNLES</sequence>
<dbReference type="EMBL" id="CP000554">
    <property type="protein sequence ID" value="ABM77290.1"/>
    <property type="molecule type" value="Genomic_DNA"/>
</dbReference>
<dbReference type="RefSeq" id="WP_011825212.1">
    <property type="nucleotide sequence ID" value="NC_008820.1"/>
</dbReference>
<dbReference type="SMR" id="A2C730"/>
<dbReference type="STRING" id="59922.P9303_05381"/>
<dbReference type="KEGG" id="pmf:P9303_05381"/>
<dbReference type="HOGENOM" id="CLU_062974_2_2_3"/>
<dbReference type="BioCyc" id="PMAR59922:G1G80-494-MONOMER"/>
<dbReference type="Proteomes" id="UP000002274">
    <property type="component" value="Chromosome"/>
</dbReference>
<dbReference type="GO" id="GO:0005829">
    <property type="term" value="C:cytosol"/>
    <property type="evidence" value="ECO:0007669"/>
    <property type="project" value="TreeGrafter"/>
</dbReference>
<dbReference type="GO" id="GO:0003677">
    <property type="term" value="F:DNA binding"/>
    <property type="evidence" value="ECO:0007669"/>
    <property type="project" value="UniProtKB-UniRule"/>
</dbReference>
<dbReference type="GO" id="GO:0006355">
    <property type="term" value="P:regulation of DNA-templated transcription"/>
    <property type="evidence" value="ECO:0007669"/>
    <property type="project" value="UniProtKB-UniRule"/>
</dbReference>
<dbReference type="FunFam" id="1.10.10.200:FF:000002">
    <property type="entry name" value="Probable transcriptional regulatory protein CLM62_37755"/>
    <property type="match status" value="1"/>
</dbReference>
<dbReference type="Gene3D" id="1.10.10.200">
    <property type="match status" value="1"/>
</dbReference>
<dbReference type="Gene3D" id="3.30.70.980">
    <property type="match status" value="2"/>
</dbReference>
<dbReference type="HAMAP" id="MF_00693">
    <property type="entry name" value="Transcrip_reg_TACO1"/>
    <property type="match status" value="1"/>
</dbReference>
<dbReference type="InterPro" id="IPR017856">
    <property type="entry name" value="Integrase-like_N"/>
</dbReference>
<dbReference type="InterPro" id="IPR048300">
    <property type="entry name" value="TACO1_YebC-like_2nd/3rd_dom"/>
</dbReference>
<dbReference type="InterPro" id="IPR049083">
    <property type="entry name" value="TACO1_YebC_N"/>
</dbReference>
<dbReference type="InterPro" id="IPR002876">
    <property type="entry name" value="Transcrip_reg_TACO1-like"/>
</dbReference>
<dbReference type="InterPro" id="IPR026564">
    <property type="entry name" value="Transcrip_reg_TACO1-like_dom3"/>
</dbReference>
<dbReference type="InterPro" id="IPR029072">
    <property type="entry name" value="YebC-like"/>
</dbReference>
<dbReference type="NCBIfam" id="NF001030">
    <property type="entry name" value="PRK00110.1"/>
    <property type="match status" value="1"/>
</dbReference>
<dbReference type="NCBIfam" id="NF009044">
    <property type="entry name" value="PRK12378.1"/>
    <property type="match status" value="1"/>
</dbReference>
<dbReference type="NCBIfam" id="TIGR01033">
    <property type="entry name" value="YebC/PmpR family DNA-binding transcriptional regulator"/>
    <property type="match status" value="1"/>
</dbReference>
<dbReference type="PANTHER" id="PTHR12532:SF6">
    <property type="entry name" value="TRANSCRIPTIONAL REGULATORY PROTEIN YEBC-RELATED"/>
    <property type="match status" value="1"/>
</dbReference>
<dbReference type="PANTHER" id="PTHR12532">
    <property type="entry name" value="TRANSLATIONAL ACTIVATOR OF CYTOCHROME C OXIDASE 1"/>
    <property type="match status" value="1"/>
</dbReference>
<dbReference type="Pfam" id="PF20772">
    <property type="entry name" value="TACO1_YebC_N"/>
    <property type="match status" value="1"/>
</dbReference>
<dbReference type="Pfam" id="PF01709">
    <property type="entry name" value="Transcrip_reg"/>
    <property type="match status" value="1"/>
</dbReference>
<dbReference type="SUPFAM" id="SSF75625">
    <property type="entry name" value="YebC-like"/>
    <property type="match status" value="1"/>
</dbReference>
<organism>
    <name type="scientific">Prochlorococcus marinus (strain MIT 9303)</name>
    <dbReference type="NCBI Taxonomy" id="59922"/>
    <lineage>
        <taxon>Bacteria</taxon>
        <taxon>Bacillati</taxon>
        <taxon>Cyanobacteriota</taxon>
        <taxon>Cyanophyceae</taxon>
        <taxon>Synechococcales</taxon>
        <taxon>Prochlorococcaceae</taxon>
        <taxon>Prochlorococcus</taxon>
    </lineage>
</organism>
<reference key="1">
    <citation type="journal article" date="2007" name="PLoS Genet.">
        <title>Patterns and implications of gene gain and loss in the evolution of Prochlorococcus.</title>
        <authorList>
            <person name="Kettler G.C."/>
            <person name="Martiny A.C."/>
            <person name="Huang K."/>
            <person name="Zucker J."/>
            <person name="Coleman M.L."/>
            <person name="Rodrigue S."/>
            <person name="Chen F."/>
            <person name="Lapidus A."/>
            <person name="Ferriera S."/>
            <person name="Johnson J."/>
            <person name="Steglich C."/>
            <person name="Church G.M."/>
            <person name="Richardson P."/>
            <person name="Chisholm S.W."/>
        </authorList>
    </citation>
    <scope>NUCLEOTIDE SEQUENCE [LARGE SCALE GENOMIC DNA]</scope>
    <source>
        <strain>MIT 9303</strain>
    </source>
</reference>